<keyword id="KW-0342">GTP-binding</keyword>
<keyword id="KW-0378">Hydrolase</keyword>
<keyword id="KW-0456">Lyase</keyword>
<keyword id="KW-0460">Magnesium</keyword>
<keyword id="KW-0464">Manganese</keyword>
<keyword id="KW-0479">Metal-binding</keyword>
<keyword id="KW-0511">Multifunctional enzyme</keyword>
<keyword id="KW-0547">Nucleotide-binding</keyword>
<keyword id="KW-0686">Riboflavin biosynthesis</keyword>
<keyword id="KW-0862">Zinc</keyword>
<feature type="chain" id="PRO_1000140364" description="Riboflavin biosynthesis protein RibBA">
    <location>
        <begin position="1"/>
        <end position="397"/>
    </location>
</feature>
<feature type="region of interest" description="DHBP synthase">
    <location>
        <begin position="1"/>
        <end position="199"/>
    </location>
</feature>
<feature type="region of interest" description="GTP cyclohydrolase II">
    <location>
        <begin position="200"/>
        <end position="397"/>
    </location>
</feature>
<feature type="active site" description="Proton acceptor; for GTP cyclohydrolase activity" evidence="1">
    <location>
        <position position="327"/>
    </location>
</feature>
<feature type="active site" description="Nucleophile; for GTP cyclohydrolase activity" evidence="1">
    <location>
        <position position="329"/>
    </location>
</feature>
<feature type="binding site" evidence="1">
    <location>
        <begin position="26"/>
        <end position="27"/>
    </location>
    <ligand>
        <name>D-ribulose 5-phosphate</name>
        <dbReference type="ChEBI" id="CHEBI:58121"/>
    </ligand>
</feature>
<feature type="binding site" evidence="1">
    <location>
        <position position="27"/>
    </location>
    <ligand>
        <name>Mg(2+)</name>
        <dbReference type="ChEBI" id="CHEBI:18420"/>
        <label>1</label>
    </ligand>
</feature>
<feature type="binding site" evidence="1">
    <location>
        <position position="27"/>
    </location>
    <ligand>
        <name>Mg(2+)</name>
        <dbReference type="ChEBI" id="CHEBI:18420"/>
        <label>2</label>
    </ligand>
</feature>
<feature type="binding site" evidence="1">
    <location>
        <position position="31"/>
    </location>
    <ligand>
        <name>D-ribulose 5-phosphate</name>
        <dbReference type="ChEBI" id="CHEBI:58121"/>
    </ligand>
</feature>
<feature type="binding site" evidence="1">
    <location>
        <begin position="138"/>
        <end position="142"/>
    </location>
    <ligand>
        <name>D-ribulose 5-phosphate</name>
        <dbReference type="ChEBI" id="CHEBI:58121"/>
    </ligand>
</feature>
<feature type="binding site" evidence="1">
    <location>
        <position position="141"/>
    </location>
    <ligand>
        <name>Mg(2+)</name>
        <dbReference type="ChEBI" id="CHEBI:18420"/>
        <label>2</label>
    </ligand>
</feature>
<feature type="binding site" evidence="1">
    <location>
        <position position="162"/>
    </location>
    <ligand>
        <name>D-ribulose 5-phosphate</name>
        <dbReference type="ChEBI" id="CHEBI:58121"/>
    </ligand>
</feature>
<feature type="binding site" evidence="1">
    <location>
        <begin position="250"/>
        <end position="254"/>
    </location>
    <ligand>
        <name>GTP</name>
        <dbReference type="ChEBI" id="CHEBI:37565"/>
    </ligand>
</feature>
<feature type="binding site" evidence="1">
    <location>
        <position position="255"/>
    </location>
    <ligand>
        <name>Zn(2+)</name>
        <dbReference type="ChEBI" id="CHEBI:29105"/>
        <note>catalytic</note>
    </ligand>
</feature>
<feature type="binding site" evidence="1">
    <location>
        <position position="266"/>
    </location>
    <ligand>
        <name>Zn(2+)</name>
        <dbReference type="ChEBI" id="CHEBI:29105"/>
        <note>catalytic</note>
    </ligand>
</feature>
<feature type="binding site" evidence="1">
    <location>
        <position position="268"/>
    </location>
    <ligand>
        <name>Zn(2+)</name>
        <dbReference type="ChEBI" id="CHEBI:29105"/>
        <note>catalytic</note>
    </ligand>
</feature>
<feature type="binding site" evidence="1">
    <location>
        <position position="271"/>
    </location>
    <ligand>
        <name>GTP</name>
        <dbReference type="ChEBI" id="CHEBI:37565"/>
    </ligand>
</feature>
<feature type="binding site" evidence="1">
    <location>
        <begin position="293"/>
        <end position="295"/>
    </location>
    <ligand>
        <name>GTP</name>
        <dbReference type="ChEBI" id="CHEBI:37565"/>
    </ligand>
</feature>
<feature type="binding site" evidence="1">
    <location>
        <position position="315"/>
    </location>
    <ligand>
        <name>GTP</name>
        <dbReference type="ChEBI" id="CHEBI:37565"/>
    </ligand>
</feature>
<feature type="binding site" evidence="1">
    <location>
        <position position="350"/>
    </location>
    <ligand>
        <name>GTP</name>
        <dbReference type="ChEBI" id="CHEBI:37565"/>
    </ligand>
</feature>
<feature type="binding site" evidence="1">
    <location>
        <position position="355"/>
    </location>
    <ligand>
        <name>GTP</name>
        <dbReference type="ChEBI" id="CHEBI:37565"/>
    </ligand>
</feature>
<feature type="site" description="Essential for DHBP synthase activity" evidence="1">
    <location>
        <position position="124"/>
    </location>
</feature>
<feature type="site" description="Essential for DHBP synthase activity" evidence="1">
    <location>
        <position position="162"/>
    </location>
</feature>
<reference key="1">
    <citation type="journal article" date="2008" name="Chem. Biol. Interact.">
        <title>Extending the Bacillus cereus group genomics to putative food-borne pathogens of different toxicity.</title>
        <authorList>
            <person name="Lapidus A."/>
            <person name="Goltsman E."/>
            <person name="Auger S."/>
            <person name="Galleron N."/>
            <person name="Segurens B."/>
            <person name="Dossat C."/>
            <person name="Land M.L."/>
            <person name="Broussolle V."/>
            <person name="Brillard J."/>
            <person name="Guinebretiere M.-H."/>
            <person name="Sanchis V."/>
            <person name="Nguen-the C."/>
            <person name="Lereclus D."/>
            <person name="Richardson P."/>
            <person name="Wincker P."/>
            <person name="Weissenbach J."/>
            <person name="Ehrlich S.D."/>
            <person name="Sorokin A."/>
        </authorList>
    </citation>
    <scope>NUCLEOTIDE SEQUENCE [LARGE SCALE GENOMIC DNA]</scope>
    <source>
        <strain>KBAB4</strain>
    </source>
</reference>
<evidence type="ECO:0000255" key="1">
    <source>
        <dbReference type="HAMAP-Rule" id="MF_01283"/>
    </source>
</evidence>
<dbReference type="EC" id="4.1.99.12" evidence="1"/>
<dbReference type="EC" id="3.5.4.25" evidence="1"/>
<dbReference type="EMBL" id="CP000903">
    <property type="protein sequence ID" value="ABY45110.1"/>
    <property type="molecule type" value="Genomic_DNA"/>
</dbReference>
<dbReference type="RefSeq" id="WP_002033864.1">
    <property type="nucleotide sequence ID" value="NC_010184.1"/>
</dbReference>
<dbReference type="SMR" id="A9VG50"/>
<dbReference type="KEGG" id="bwe:BcerKBAB4_3943"/>
<dbReference type="eggNOG" id="COG0108">
    <property type="taxonomic scope" value="Bacteria"/>
</dbReference>
<dbReference type="eggNOG" id="COG0807">
    <property type="taxonomic scope" value="Bacteria"/>
</dbReference>
<dbReference type="HOGENOM" id="CLU_020273_1_2_9"/>
<dbReference type="UniPathway" id="UPA00275">
    <property type="reaction ID" value="UER00399"/>
</dbReference>
<dbReference type="UniPathway" id="UPA00275">
    <property type="reaction ID" value="UER00400"/>
</dbReference>
<dbReference type="Proteomes" id="UP000002154">
    <property type="component" value="Chromosome"/>
</dbReference>
<dbReference type="GO" id="GO:0005829">
    <property type="term" value="C:cytosol"/>
    <property type="evidence" value="ECO:0007669"/>
    <property type="project" value="TreeGrafter"/>
</dbReference>
<dbReference type="GO" id="GO:0008686">
    <property type="term" value="F:3,4-dihydroxy-2-butanone-4-phosphate synthase activity"/>
    <property type="evidence" value="ECO:0007669"/>
    <property type="project" value="UniProtKB-UniRule"/>
</dbReference>
<dbReference type="GO" id="GO:0005525">
    <property type="term" value="F:GTP binding"/>
    <property type="evidence" value="ECO:0007669"/>
    <property type="project" value="UniProtKB-KW"/>
</dbReference>
<dbReference type="GO" id="GO:0003935">
    <property type="term" value="F:GTP cyclohydrolase II activity"/>
    <property type="evidence" value="ECO:0007669"/>
    <property type="project" value="UniProtKB-UniRule"/>
</dbReference>
<dbReference type="GO" id="GO:0000287">
    <property type="term" value="F:magnesium ion binding"/>
    <property type="evidence" value="ECO:0007669"/>
    <property type="project" value="UniProtKB-UniRule"/>
</dbReference>
<dbReference type="GO" id="GO:0030145">
    <property type="term" value="F:manganese ion binding"/>
    <property type="evidence" value="ECO:0007669"/>
    <property type="project" value="UniProtKB-UniRule"/>
</dbReference>
<dbReference type="GO" id="GO:0008270">
    <property type="term" value="F:zinc ion binding"/>
    <property type="evidence" value="ECO:0007669"/>
    <property type="project" value="UniProtKB-UniRule"/>
</dbReference>
<dbReference type="GO" id="GO:0009231">
    <property type="term" value="P:riboflavin biosynthetic process"/>
    <property type="evidence" value="ECO:0007669"/>
    <property type="project" value="UniProtKB-UniRule"/>
</dbReference>
<dbReference type="CDD" id="cd00641">
    <property type="entry name" value="GTP_cyclohydro2"/>
    <property type="match status" value="1"/>
</dbReference>
<dbReference type="FunFam" id="3.40.50.10990:FF:000001">
    <property type="entry name" value="Riboflavin biosynthesis protein RibBA"/>
    <property type="match status" value="1"/>
</dbReference>
<dbReference type="FunFam" id="3.90.870.10:FF:000001">
    <property type="entry name" value="Riboflavin biosynthesis protein RibBA"/>
    <property type="match status" value="1"/>
</dbReference>
<dbReference type="Gene3D" id="3.90.870.10">
    <property type="entry name" value="DHBP synthase"/>
    <property type="match status" value="1"/>
</dbReference>
<dbReference type="Gene3D" id="3.40.50.10990">
    <property type="entry name" value="GTP cyclohydrolase II"/>
    <property type="match status" value="1"/>
</dbReference>
<dbReference type="HAMAP" id="MF_00179">
    <property type="entry name" value="RibA"/>
    <property type="match status" value="1"/>
</dbReference>
<dbReference type="HAMAP" id="MF_00180">
    <property type="entry name" value="RibB"/>
    <property type="match status" value="1"/>
</dbReference>
<dbReference type="HAMAP" id="MF_01283">
    <property type="entry name" value="RibBA"/>
    <property type="match status" value="1"/>
</dbReference>
<dbReference type="InterPro" id="IPR017945">
    <property type="entry name" value="DHBP_synth_RibB-like_a/b_dom"/>
</dbReference>
<dbReference type="InterPro" id="IPR000422">
    <property type="entry name" value="DHBP_synthase_RibB"/>
</dbReference>
<dbReference type="InterPro" id="IPR032677">
    <property type="entry name" value="GTP_cyclohydro_II"/>
</dbReference>
<dbReference type="InterPro" id="IPR000926">
    <property type="entry name" value="RibA"/>
</dbReference>
<dbReference type="InterPro" id="IPR036144">
    <property type="entry name" value="RibA-like_sf"/>
</dbReference>
<dbReference type="InterPro" id="IPR016299">
    <property type="entry name" value="Riboflavin_synth_RibBA"/>
</dbReference>
<dbReference type="NCBIfam" id="NF001591">
    <property type="entry name" value="PRK00393.1"/>
    <property type="match status" value="1"/>
</dbReference>
<dbReference type="NCBIfam" id="NF006803">
    <property type="entry name" value="PRK09311.1"/>
    <property type="match status" value="1"/>
</dbReference>
<dbReference type="NCBIfam" id="TIGR00505">
    <property type="entry name" value="ribA"/>
    <property type="match status" value="1"/>
</dbReference>
<dbReference type="NCBIfam" id="TIGR00506">
    <property type="entry name" value="ribB"/>
    <property type="match status" value="1"/>
</dbReference>
<dbReference type="PANTHER" id="PTHR21327:SF18">
    <property type="entry name" value="3,4-DIHYDROXY-2-BUTANONE 4-PHOSPHATE SYNTHASE"/>
    <property type="match status" value="1"/>
</dbReference>
<dbReference type="PANTHER" id="PTHR21327">
    <property type="entry name" value="GTP CYCLOHYDROLASE II-RELATED"/>
    <property type="match status" value="1"/>
</dbReference>
<dbReference type="Pfam" id="PF00926">
    <property type="entry name" value="DHBP_synthase"/>
    <property type="match status" value="1"/>
</dbReference>
<dbReference type="Pfam" id="PF00925">
    <property type="entry name" value="GTP_cyclohydro2"/>
    <property type="match status" value="1"/>
</dbReference>
<dbReference type="PIRSF" id="PIRSF001259">
    <property type="entry name" value="RibA"/>
    <property type="match status" value="1"/>
</dbReference>
<dbReference type="SUPFAM" id="SSF142695">
    <property type="entry name" value="RibA-like"/>
    <property type="match status" value="1"/>
</dbReference>
<dbReference type="SUPFAM" id="SSF55821">
    <property type="entry name" value="YrdC/RibB"/>
    <property type="match status" value="1"/>
</dbReference>
<protein>
    <recommendedName>
        <fullName evidence="1">Riboflavin biosynthesis protein RibBA</fullName>
    </recommendedName>
    <domain>
        <recommendedName>
            <fullName evidence="1">3,4-dihydroxy-2-butanone 4-phosphate synthase</fullName>
            <shortName evidence="1">DHBP synthase</shortName>
            <ecNumber evidence="1">4.1.99.12</ecNumber>
        </recommendedName>
    </domain>
    <domain>
        <recommendedName>
            <fullName evidence="1">GTP cyclohydrolase-2</fullName>
            <ecNumber evidence="1">3.5.4.25</ecNumber>
        </recommendedName>
        <alternativeName>
            <fullName evidence="1">GTP cyclohydrolase II</fullName>
        </alternativeName>
    </domain>
</protein>
<name>RIBBA_BACMK</name>
<sequence length="397" mass="43955">MFHRIEEALEDLKQGKVVIVCDDENRENEGDFIALAEYITPETINFMITHGRGLVCVPITEEYAERLQLEPMVSHNTDSHHTAFTVSIDHVSTTTGISAHERATTIQELLNPASKGSDFNRPGHIFPLIAKEGGVLRRAGHTEAAVDLAKLCGAEPAGVICEIINEDGTMARVPDLLECAKQFDIKMITIEDLIAYRRHHETLVTREVEITLPTDFGTFHAIGYSNSLDMKEHIALVKGDISTGEPVLVRVHSECLTGDVFGSCRCDCGPQLHAALAQIEREGKGVLLYMRQEGRGIGLLNKLRAYKLQEEGLDTVEANEKLGFPADLRDYGIGAQILKDLGLQSLRLLTNNPRKIAGLQGYDLEVTERVPLQMPTKEENKTYLQTKASKLGHLLNL</sequence>
<proteinExistence type="inferred from homology"/>
<gene>
    <name evidence="1" type="primary">ribBA</name>
    <name type="ordered locus">BcerKBAB4_3943</name>
</gene>
<comment type="function">
    <text evidence="1">Catalyzes the conversion of D-ribulose 5-phosphate to formate and 3,4-dihydroxy-2-butanone 4-phosphate.</text>
</comment>
<comment type="function">
    <text evidence="1">Catalyzes the conversion of GTP to 2,5-diamino-6-ribosylamino-4(3H)-pyrimidinone 5'-phosphate (DARP), formate and pyrophosphate.</text>
</comment>
<comment type="catalytic activity">
    <reaction evidence="1">
        <text>D-ribulose 5-phosphate = (2S)-2-hydroxy-3-oxobutyl phosphate + formate + H(+)</text>
        <dbReference type="Rhea" id="RHEA:18457"/>
        <dbReference type="ChEBI" id="CHEBI:15378"/>
        <dbReference type="ChEBI" id="CHEBI:15740"/>
        <dbReference type="ChEBI" id="CHEBI:58121"/>
        <dbReference type="ChEBI" id="CHEBI:58830"/>
        <dbReference type="EC" id="4.1.99.12"/>
    </reaction>
</comment>
<comment type="catalytic activity">
    <reaction evidence="1">
        <text>GTP + 4 H2O = 2,5-diamino-6-hydroxy-4-(5-phosphoribosylamino)-pyrimidine + formate + 2 phosphate + 3 H(+)</text>
        <dbReference type="Rhea" id="RHEA:23704"/>
        <dbReference type="ChEBI" id="CHEBI:15377"/>
        <dbReference type="ChEBI" id="CHEBI:15378"/>
        <dbReference type="ChEBI" id="CHEBI:15740"/>
        <dbReference type="ChEBI" id="CHEBI:37565"/>
        <dbReference type="ChEBI" id="CHEBI:43474"/>
        <dbReference type="ChEBI" id="CHEBI:58614"/>
        <dbReference type="EC" id="3.5.4.25"/>
    </reaction>
</comment>
<comment type="cofactor">
    <cofactor evidence="1">
        <name>Mg(2+)</name>
        <dbReference type="ChEBI" id="CHEBI:18420"/>
    </cofactor>
    <cofactor evidence="1">
        <name>Mn(2+)</name>
        <dbReference type="ChEBI" id="CHEBI:29035"/>
    </cofactor>
    <text evidence="1">Binds 2 divalent metal cations per subunit. Magnesium or manganese.</text>
</comment>
<comment type="cofactor">
    <cofactor evidence="1">
        <name>Zn(2+)</name>
        <dbReference type="ChEBI" id="CHEBI:29105"/>
    </cofactor>
    <text evidence="1">Binds 1 zinc ion per subunit.</text>
</comment>
<comment type="pathway">
    <text evidence="1">Cofactor biosynthesis; riboflavin biosynthesis; 2-hydroxy-3-oxobutyl phosphate from D-ribulose 5-phosphate: step 1/1.</text>
</comment>
<comment type="pathway">
    <text evidence="1">Cofactor biosynthesis; riboflavin biosynthesis; 5-amino-6-(D-ribitylamino)uracil from GTP: step 1/4.</text>
</comment>
<comment type="similarity">
    <text evidence="1">In the N-terminal section; belongs to the DHBP synthase family.</text>
</comment>
<comment type="similarity">
    <text evidence="1">In the C-terminal section; belongs to the GTP cyclohydrolase II family.</text>
</comment>
<accession>A9VG50</accession>
<organism>
    <name type="scientific">Bacillus mycoides (strain KBAB4)</name>
    <name type="common">Bacillus weihenstephanensis</name>
    <dbReference type="NCBI Taxonomy" id="315730"/>
    <lineage>
        <taxon>Bacteria</taxon>
        <taxon>Bacillati</taxon>
        <taxon>Bacillota</taxon>
        <taxon>Bacilli</taxon>
        <taxon>Bacillales</taxon>
        <taxon>Bacillaceae</taxon>
        <taxon>Bacillus</taxon>
        <taxon>Bacillus cereus group</taxon>
    </lineage>
</organism>